<comment type="subcellular location">
    <subcellularLocation>
        <location evidence="4">Membrane</location>
        <topology evidence="4">Single-pass type II membrane protein</topology>
    </subcellularLocation>
</comment>
<comment type="similarity">
    <text evidence="4">Belongs to the 'GDXG' lipolytic enzyme family.</text>
</comment>
<proteinExistence type="inferred from homology"/>
<keyword id="KW-0325">Glycoprotein</keyword>
<keyword id="KW-0378">Hydrolase</keyword>
<keyword id="KW-0472">Membrane</keyword>
<keyword id="KW-1185">Reference proteome</keyword>
<keyword id="KW-0735">Signal-anchor</keyword>
<keyword id="KW-0812">Transmembrane</keyword>
<keyword id="KW-1133">Transmembrane helix</keyword>
<protein>
    <recommendedName>
        <fullName>Arylacetamide deacetylase-like 4</fullName>
        <ecNumber>3.1.1.-</ecNumber>
    </recommendedName>
</protein>
<sequence>MAVPWLVLLLALPIFFLGVFVWAVFEHFLTTDIPATLQHPAKLRFLHCIFLYLVTLGNIFEKLGICSMPKFIRFLHDSVRIKKDPELVVTDLRFGTIPVRLFQPKAASSRPRRGIIFYHGGATVFGSLDCYHGLCNYLARETESVLLMIGYRKLPDHHSPALFQDCMNASIHFLKALETYGVDPSRVVVCGESVGGAAVAAITQALVGRSDLPRIRAQVLIYPVVQAFCLQLPSFQQNQNVPLLSRKFMVTSLCNYLAIDLSWRDAILNGTCVPPDVWRKYEKWLSPDNIPKKFKNRGYQPWSPGPFNEAAYLEAKHMLDVENSPLIADDEVIAQLPEAFLVSCENDILRDDSLLYKKRLEDQGVRVTWYHLYDGFHGSIIFFDKKALSFPCSLKIVNAVVSYIKGI</sequence>
<name>ADCL4_HUMAN</name>
<accession>Q5VUY2</accession>
<reference key="1">
    <citation type="journal article" date="2006" name="Nature">
        <title>The DNA sequence and biological annotation of human chromosome 1.</title>
        <authorList>
            <person name="Gregory S.G."/>
            <person name="Barlow K.F."/>
            <person name="McLay K.E."/>
            <person name="Kaul R."/>
            <person name="Swarbreck D."/>
            <person name="Dunham A."/>
            <person name="Scott C.E."/>
            <person name="Howe K.L."/>
            <person name="Woodfine K."/>
            <person name="Spencer C.C.A."/>
            <person name="Jones M.C."/>
            <person name="Gillson C."/>
            <person name="Searle S."/>
            <person name="Zhou Y."/>
            <person name="Kokocinski F."/>
            <person name="McDonald L."/>
            <person name="Evans R."/>
            <person name="Phillips K."/>
            <person name="Atkinson A."/>
            <person name="Cooper R."/>
            <person name="Jones C."/>
            <person name="Hall R.E."/>
            <person name="Andrews T.D."/>
            <person name="Lloyd C."/>
            <person name="Ainscough R."/>
            <person name="Almeida J.P."/>
            <person name="Ambrose K.D."/>
            <person name="Anderson F."/>
            <person name="Andrew R.W."/>
            <person name="Ashwell R.I.S."/>
            <person name="Aubin K."/>
            <person name="Babbage A.K."/>
            <person name="Bagguley C.L."/>
            <person name="Bailey J."/>
            <person name="Beasley H."/>
            <person name="Bethel G."/>
            <person name="Bird C.P."/>
            <person name="Bray-Allen S."/>
            <person name="Brown J.Y."/>
            <person name="Brown A.J."/>
            <person name="Buckley D."/>
            <person name="Burton J."/>
            <person name="Bye J."/>
            <person name="Carder C."/>
            <person name="Chapman J.C."/>
            <person name="Clark S.Y."/>
            <person name="Clarke G."/>
            <person name="Clee C."/>
            <person name="Cobley V."/>
            <person name="Collier R.E."/>
            <person name="Corby N."/>
            <person name="Coville G.J."/>
            <person name="Davies J."/>
            <person name="Deadman R."/>
            <person name="Dunn M."/>
            <person name="Earthrowl M."/>
            <person name="Ellington A.G."/>
            <person name="Errington H."/>
            <person name="Frankish A."/>
            <person name="Frankland J."/>
            <person name="French L."/>
            <person name="Garner P."/>
            <person name="Garnett J."/>
            <person name="Gay L."/>
            <person name="Ghori M.R.J."/>
            <person name="Gibson R."/>
            <person name="Gilby L.M."/>
            <person name="Gillett W."/>
            <person name="Glithero R.J."/>
            <person name="Grafham D.V."/>
            <person name="Griffiths C."/>
            <person name="Griffiths-Jones S."/>
            <person name="Grocock R."/>
            <person name="Hammond S."/>
            <person name="Harrison E.S.I."/>
            <person name="Hart E."/>
            <person name="Haugen E."/>
            <person name="Heath P.D."/>
            <person name="Holmes S."/>
            <person name="Holt K."/>
            <person name="Howden P.J."/>
            <person name="Hunt A.R."/>
            <person name="Hunt S.E."/>
            <person name="Hunter G."/>
            <person name="Isherwood J."/>
            <person name="James R."/>
            <person name="Johnson C."/>
            <person name="Johnson D."/>
            <person name="Joy A."/>
            <person name="Kay M."/>
            <person name="Kershaw J.K."/>
            <person name="Kibukawa M."/>
            <person name="Kimberley A.M."/>
            <person name="King A."/>
            <person name="Knights A.J."/>
            <person name="Lad H."/>
            <person name="Laird G."/>
            <person name="Lawlor S."/>
            <person name="Leongamornlert D.A."/>
            <person name="Lloyd D.M."/>
            <person name="Loveland J."/>
            <person name="Lovell J."/>
            <person name="Lush M.J."/>
            <person name="Lyne R."/>
            <person name="Martin S."/>
            <person name="Mashreghi-Mohammadi M."/>
            <person name="Matthews L."/>
            <person name="Matthews N.S.W."/>
            <person name="McLaren S."/>
            <person name="Milne S."/>
            <person name="Mistry S."/>
            <person name="Moore M.J.F."/>
            <person name="Nickerson T."/>
            <person name="O'Dell C.N."/>
            <person name="Oliver K."/>
            <person name="Palmeiri A."/>
            <person name="Palmer S.A."/>
            <person name="Parker A."/>
            <person name="Patel D."/>
            <person name="Pearce A.V."/>
            <person name="Peck A.I."/>
            <person name="Pelan S."/>
            <person name="Phelps K."/>
            <person name="Phillimore B.J."/>
            <person name="Plumb R."/>
            <person name="Rajan J."/>
            <person name="Raymond C."/>
            <person name="Rouse G."/>
            <person name="Saenphimmachak C."/>
            <person name="Sehra H.K."/>
            <person name="Sheridan E."/>
            <person name="Shownkeen R."/>
            <person name="Sims S."/>
            <person name="Skuce C.D."/>
            <person name="Smith M."/>
            <person name="Steward C."/>
            <person name="Subramanian S."/>
            <person name="Sycamore N."/>
            <person name="Tracey A."/>
            <person name="Tromans A."/>
            <person name="Van Helmond Z."/>
            <person name="Wall M."/>
            <person name="Wallis J.M."/>
            <person name="White S."/>
            <person name="Whitehead S.L."/>
            <person name="Wilkinson J.E."/>
            <person name="Willey D.L."/>
            <person name="Williams H."/>
            <person name="Wilming L."/>
            <person name="Wray P.W."/>
            <person name="Wu Z."/>
            <person name="Coulson A."/>
            <person name="Vaudin M."/>
            <person name="Sulston J.E."/>
            <person name="Durbin R.M."/>
            <person name="Hubbard T."/>
            <person name="Wooster R."/>
            <person name="Dunham I."/>
            <person name="Carter N.P."/>
            <person name="McVean G."/>
            <person name="Ross M.T."/>
            <person name="Harrow J."/>
            <person name="Olson M.V."/>
            <person name="Beck S."/>
            <person name="Rogers J."/>
            <person name="Bentley D.R."/>
        </authorList>
    </citation>
    <scope>NUCLEOTIDE SEQUENCE [LARGE SCALE GENOMIC DNA]</scope>
</reference>
<organism>
    <name type="scientific">Homo sapiens</name>
    <name type="common">Human</name>
    <dbReference type="NCBI Taxonomy" id="9606"/>
    <lineage>
        <taxon>Eukaryota</taxon>
        <taxon>Metazoa</taxon>
        <taxon>Chordata</taxon>
        <taxon>Craniata</taxon>
        <taxon>Vertebrata</taxon>
        <taxon>Euteleostomi</taxon>
        <taxon>Mammalia</taxon>
        <taxon>Eutheria</taxon>
        <taxon>Euarchontoglires</taxon>
        <taxon>Primates</taxon>
        <taxon>Haplorrhini</taxon>
        <taxon>Catarrhini</taxon>
        <taxon>Hominidae</taxon>
        <taxon>Homo</taxon>
    </lineage>
</organism>
<gene>
    <name type="primary">AADACL4</name>
</gene>
<evidence type="ECO:0000250" key="1">
    <source>
        <dbReference type="UniProtKB" id="Q5NUF3"/>
    </source>
</evidence>
<evidence type="ECO:0000250" key="2">
    <source>
        <dbReference type="UniProtKB" id="Q8BLF1"/>
    </source>
</evidence>
<evidence type="ECO:0000255" key="3"/>
<evidence type="ECO:0000305" key="4"/>
<feature type="chain" id="PRO_0000265937" description="Arylacetamide deacetylase-like 4">
    <location>
        <begin position="1"/>
        <end position="407"/>
    </location>
</feature>
<feature type="topological domain" description="Cytoplasmic" evidence="3">
    <location>
        <begin position="1"/>
        <end position="4"/>
    </location>
</feature>
<feature type="transmembrane region" description="Helical; Signal-anchor for type II membrane protein" evidence="3">
    <location>
        <begin position="5"/>
        <end position="25"/>
    </location>
</feature>
<feature type="topological domain" description="Lumenal" evidence="3">
    <location>
        <begin position="26"/>
        <end position="407"/>
    </location>
</feature>
<feature type="short sequence motif" description="Involved in the stabilization of the negatively charged intermediate by the formation of the oxyanion hole" evidence="1">
    <location>
        <begin position="119"/>
        <end position="121"/>
    </location>
</feature>
<feature type="active site" evidence="2">
    <location>
        <position position="193"/>
    </location>
</feature>
<feature type="active site" evidence="2">
    <location>
        <position position="347"/>
    </location>
</feature>
<feature type="active site" evidence="2">
    <location>
        <position position="377"/>
    </location>
</feature>
<feature type="glycosylation site" description="N-linked (GlcNAc...) asparagine" evidence="3">
    <location>
        <position position="168"/>
    </location>
</feature>
<feature type="glycosylation site" description="N-linked (GlcNAc...) asparagine" evidence="3">
    <location>
        <position position="269"/>
    </location>
</feature>
<dbReference type="EC" id="3.1.1.-"/>
<dbReference type="EMBL" id="AL513016">
    <property type="status" value="NOT_ANNOTATED_CDS"/>
    <property type="molecule type" value="Genomic_DNA"/>
</dbReference>
<dbReference type="CCDS" id="CCDS30590.1"/>
<dbReference type="RefSeq" id="NP_001013652.1">
    <property type="nucleotide sequence ID" value="NM_001013630.2"/>
</dbReference>
<dbReference type="SMR" id="Q5VUY2"/>
<dbReference type="IntAct" id="Q5VUY2">
    <property type="interactions" value="1"/>
</dbReference>
<dbReference type="STRING" id="9606.ENSP00000365395"/>
<dbReference type="ESTHER" id="human-AADACL4">
    <property type="family name" value="Arylacetamide_deacetylase"/>
</dbReference>
<dbReference type="GlyCosmos" id="Q5VUY2">
    <property type="glycosylation" value="2 sites, No reported glycans"/>
</dbReference>
<dbReference type="GlyGen" id="Q5VUY2">
    <property type="glycosylation" value="2 sites"/>
</dbReference>
<dbReference type="iPTMnet" id="Q5VUY2"/>
<dbReference type="PhosphoSitePlus" id="Q5VUY2"/>
<dbReference type="BioMuta" id="AADACL4"/>
<dbReference type="DMDM" id="74747169"/>
<dbReference type="jPOST" id="Q5VUY2"/>
<dbReference type="PaxDb" id="9606-ENSP00000365395"/>
<dbReference type="Antibodypedia" id="46608">
    <property type="antibodies" value="95 antibodies from 19 providers"/>
</dbReference>
<dbReference type="DNASU" id="343066"/>
<dbReference type="Ensembl" id="ENST00000376221.2">
    <property type="protein sequence ID" value="ENSP00000365395.1"/>
    <property type="gene ID" value="ENSG00000204518.3"/>
</dbReference>
<dbReference type="GeneID" id="343066"/>
<dbReference type="KEGG" id="hsa:343066"/>
<dbReference type="MANE-Select" id="ENST00000376221.2">
    <property type="protein sequence ID" value="ENSP00000365395.1"/>
    <property type="RefSeq nucleotide sequence ID" value="NM_001013630.2"/>
    <property type="RefSeq protein sequence ID" value="NP_001013652.1"/>
</dbReference>
<dbReference type="UCSC" id="uc001auf.3">
    <property type="organism name" value="human"/>
</dbReference>
<dbReference type="AGR" id="HGNC:32038"/>
<dbReference type="CTD" id="343066"/>
<dbReference type="GeneCards" id="AADACL4"/>
<dbReference type="HGNC" id="HGNC:32038">
    <property type="gene designation" value="AADACL4"/>
</dbReference>
<dbReference type="HPA" id="ENSG00000204518">
    <property type="expression patterns" value="Tissue enhanced (choroid)"/>
</dbReference>
<dbReference type="neXtProt" id="NX_Q5VUY2"/>
<dbReference type="OpenTargets" id="ENSG00000204518"/>
<dbReference type="PharmGKB" id="PA145147537"/>
<dbReference type="VEuPathDB" id="HostDB:ENSG00000204518"/>
<dbReference type="eggNOG" id="KOG1515">
    <property type="taxonomic scope" value="Eukaryota"/>
</dbReference>
<dbReference type="GeneTree" id="ENSGT00940000157630"/>
<dbReference type="HOGENOM" id="CLU_012494_12_2_1"/>
<dbReference type="InParanoid" id="Q5VUY2"/>
<dbReference type="OMA" id="MIGYRKL"/>
<dbReference type="OrthoDB" id="408631at2759"/>
<dbReference type="PAN-GO" id="Q5VUY2">
    <property type="GO annotations" value="0 GO annotations based on evolutionary models"/>
</dbReference>
<dbReference type="PhylomeDB" id="Q5VUY2"/>
<dbReference type="TreeFam" id="TF314978"/>
<dbReference type="PathwayCommons" id="Q5VUY2"/>
<dbReference type="SignaLink" id="Q5VUY2"/>
<dbReference type="BioGRID-ORCS" id="343066">
    <property type="hits" value="7 hits in 1138 CRISPR screens"/>
</dbReference>
<dbReference type="GeneWiki" id="AADACL4_(gene)"/>
<dbReference type="GenomeRNAi" id="343066"/>
<dbReference type="Pharos" id="Q5VUY2">
    <property type="development level" value="Tdark"/>
</dbReference>
<dbReference type="PRO" id="PR:Q5VUY2"/>
<dbReference type="Proteomes" id="UP000005640">
    <property type="component" value="Chromosome 1"/>
</dbReference>
<dbReference type="RNAct" id="Q5VUY2">
    <property type="molecule type" value="protein"/>
</dbReference>
<dbReference type="Bgee" id="ENSG00000204518">
    <property type="expression patterns" value="Expressed in omental fat pad and 34 other cell types or tissues"/>
</dbReference>
<dbReference type="GO" id="GO:0016020">
    <property type="term" value="C:membrane"/>
    <property type="evidence" value="ECO:0007669"/>
    <property type="project" value="UniProtKB-SubCell"/>
</dbReference>
<dbReference type="GO" id="GO:0052689">
    <property type="term" value="F:carboxylic ester hydrolase activity"/>
    <property type="evidence" value="ECO:0007669"/>
    <property type="project" value="InterPro"/>
</dbReference>
<dbReference type="Gene3D" id="3.40.50.1820">
    <property type="entry name" value="alpha/beta hydrolase"/>
    <property type="match status" value="1"/>
</dbReference>
<dbReference type="InterPro" id="IPR013094">
    <property type="entry name" value="AB_hydrolase_3"/>
</dbReference>
<dbReference type="InterPro" id="IPR029058">
    <property type="entry name" value="AB_hydrolase_fold"/>
</dbReference>
<dbReference type="InterPro" id="IPR017157">
    <property type="entry name" value="Arylacetamide_deacetylase"/>
</dbReference>
<dbReference type="InterPro" id="IPR050300">
    <property type="entry name" value="GDXG_lipolytic_enzyme"/>
</dbReference>
<dbReference type="PANTHER" id="PTHR48081">
    <property type="entry name" value="AB HYDROLASE SUPERFAMILY PROTEIN C4A8.06C"/>
    <property type="match status" value="1"/>
</dbReference>
<dbReference type="PANTHER" id="PTHR48081:SF32">
    <property type="entry name" value="ALPHA_BETA HYDROLASE FOLD-3 DOMAIN-CONTAINING PROTEIN"/>
    <property type="match status" value="1"/>
</dbReference>
<dbReference type="Pfam" id="PF07859">
    <property type="entry name" value="Abhydrolase_3"/>
    <property type="match status" value="2"/>
</dbReference>
<dbReference type="PIRSF" id="PIRSF037251">
    <property type="entry name" value="Arylacetamide_deacetylase"/>
    <property type="match status" value="1"/>
</dbReference>
<dbReference type="SUPFAM" id="SSF53474">
    <property type="entry name" value="alpha/beta-Hydrolases"/>
    <property type="match status" value="1"/>
</dbReference>